<protein>
    <recommendedName>
        <fullName evidence="1">Sugar fermentation stimulation protein homolog</fullName>
    </recommendedName>
</protein>
<comment type="similarity">
    <text evidence="1">Belongs to the SfsA family.</text>
</comment>
<accession>A3PAY3</accession>
<feature type="chain" id="PRO_1000008002" description="Sugar fermentation stimulation protein homolog">
    <location>
        <begin position="1"/>
        <end position="246"/>
    </location>
</feature>
<sequence>MNDRIIDFDPLIEGVLIKRYKRYLADIALESGEVVTAHCANTGPMKGLLREGAKVRISVSTSPKRKLPFTWEQICVLDEKNEEVWVGINTLFANKLIKKVIEKNLLDEIIGEIETIKSEVPYGKDKKSRIDFFLTPKSSNPDKRNIYIEVKNTTWIRGNVALFPDTVTKRGQKHLIELKELIPESKSVLVLCITRKDACFFAPGDEADPLYGNLFRESLSAGMITIPCSFEFHKDHISWRGIKPLK</sequence>
<proteinExistence type="inferred from homology"/>
<reference key="1">
    <citation type="journal article" date="2007" name="PLoS Genet.">
        <title>Patterns and implications of gene gain and loss in the evolution of Prochlorococcus.</title>
        <authorList>
            <person name="Kettler G.C."/>
            <person name="Martiny A.C."/>
            <person name="Huang K."/>
            <person name="Zucker J."/>
            <person name="Coleman M.L."/>
            <person name="Rodrigue S."/>
            <person name="Chen F."/>
            <person name="Lapidus A."/>
            <person name="Ferriera S."/>
            <person name="Johnson J."/>
            <person name="Steglich C."/>
            <person name="Church G.M."/>
            <person name="Richardson P."/>
            <person name="Chisholm S.W."/>
        </authorList>
    </citation>
    <scope>NUCLEOTIDE SEQUENCE [LARGE SCALE GENOMIC DNA]</scope>
    <source>
        <strain>MIT 9301</strain>
    </source>
</reference>
<name>SFSA_PROM0</name>
<organism>
    <name type="scientific">Prochlorococcus marinus (strain MIT 9301)</name>
    <dbReference type="NCBI Taxonomy" id="167546"/>
    <lineage>
        <taxon>Bacteria</taxon>
        <taxon>Bacillati</taxon>
        <taxon>Cyanobacteriota</taxon>
        <taxon>Cyanophyceae</taxon>
        <taxon>Synechococcales</taxon>
        <taxon>Prochlorococcaceae</taxon>
        <taxon>Prochlorococcus</taxon>
    </lineage>
</organism>
<gene>
    <name evidence="1" type="primary">sfsA</name>
    <name type="ordered locus">P9301_02851</name>
</gene>
<dbReference type="EMBL" id="CP000576">
    <property type="protein sequence ID" value="ABO16908.1"/>
    <property type="molecule type" value="Genomic_DNA"/>
</dbReference>
<dbReference type="RefSeq" id="WP_011862303.1">
    <property type="nucleotide sequence ID" value="NC_009091.1"/>
</dbReference>
<dbReference type="SMR" id="A3PAY3"/>
<dbReference type="STRING" id="167546.P9301_02851"/>
<dbReference type="KEGG" id="pmg:P9301_02851"/>
<dbReference type="eggNOG" id="COG1489">
    <property type="taxonomic scope" value="Bacteria"/>
</dbReference>
<dbReference type="HOGENOM" id="CLU_052299_2_0_3"/>
<dbReference type="OrthoDB" id="9802365at2"/>
<dbReference type="Proteomes" id="UP000001430">
    <property type="component" value="Chromosome"/>
</dbReference>
<dbReference type="GO" id="GO:0003677">
    <property type="term" value="F:DNA binding"/>
    <property type="evidence" value="ECO:0007669"/>
    <property type="project" value="InterPro"/>
</dbReference>
<dbReference type="CDD" id="cd22359">
    <property type="entry name" value="SfsA-like_bacterial"/>
    <property type="match status" value="1"/>
</dbReference>
<dbReference type="Gene3D" id="2.40.50.580">
    <property type="match status" value="1"/>
</dbReference>
<dbReference type="Gene3D" id="3.40.1350.60">
    <property type="match status" value="1"/>
</dbReference>
<dbReference type="HAMAP" id="MF_00095">
    <property type="entry name" value="SfsA"/>
    <property type="match status" value="1"/>
</dbReference>
<dbReference type="InterPro" id="IPR005224">
    <property type="entry name" value="SfsA"/>
</dbReference>
<dbReference type="InterPro" id="IPR040452">
    <property type="entry name" value="SfsA_C"/>
</dbReference>
<dbReference type="InterPro" id="IPR041465">
    <property type="entry name" value="SfsA_N"/>
</dbReference>
<dbReference type="NCBIfam" id="TIGR00230">
    <property type="entry name" value="sfsA"/>
    <property type="match status" value="1"/>
</dbReference>
<dbReference type="PANTHER" id="PTHR30545">
    <property type="entry name" value="SUGAR FERMENTATION STIMULATION PROTEIN A"/>
    <property type="match status" value="1"/>
</dbReference>
<dbReference type="PANTHER" id="PTHR30545:SF2">
    <property type="entry name" value="SUGAR FERMENTATION STIMULATION PROTEIN A"/>
    <property type="match status" value="1"/>
</dbReference>
<dbReference type="Pfam" id="PF03749">
    <property type="entry name" value="SfsA"/>
    <property type="match status" value="1"/>
</dbReference>
<dbReference type="Pfam" id="PF17746">
    <property type="entry name" value="SfsA_N"/>
    <property type="match status" value="1"/>
</dbReference>
<keyword id="KW-1185">Reference proteome</keyword>
<evidence type="ECO:0000255" key="1">
    <source>
        <dbReference type="HAMAP-Rule" id="MF_00095"/>
    </source>
</evidence>